<accession>B2VBL4</accession>
<evidence type="ECO:0000255" key="1">
    <source>
        <dbReference type="HAMAP-Rule" id="MF_01864"/>
    </source>
</evidence>
<evidence type="ECO:0000255" key="2">
    <source>
        <dbReference type="PROSITE-ProRule" id="PRU01266"/>
    </source>
</evidence>
<evidence type="ECO:0000305" key="3"/>
<dbReference type="EC" id="2.8.4.3" evidence="1"/>
<dbReference type="EMBL" id="CU468135">
    <property type="protein sequence ID" value="CAO97383.1"/>
    <property type="status" value="ALT_INIT"/>
    <property type="molecule type" value="Genomic_DNA"/>
</dbReference>
<dbReference type="RefSeq" id="WP_042959025.1">
    <property type="nucleotide sequence ID" value="NC_010694.1"/>
</dbReference>
<dbReference type="SMR" id="B2VBL4"/>
<dbReference type="STRING" id="465817.ETA_23370"/>
<dbReference type="KEGG" id="eta:ETA_23370"/>
<dbReference type="eggNOG" id="COG0621">
    <property type="taxonomic scope" value="Bacteria"/>
</dbReference>
<dbReference type="HOGENOM" id="CLU_018697_2_0_6"/>
<dbReference type="OrthoDB" id="9805215at2"/>
<dbReference type="Proteomes" id="UP000001726">
    <property type="component" value="Chromosome"/>
</dbReference>
<dbReference type="GO" id="GO:0005829">
    <property type="term" value="C:cytosol"/>
    <property type="evidence" value="ECO:0007669"/>
    <property type="project" value="TreeGrafter"/>
</dbReference>
<dbReference type="GO" id="GO:0051539">
    <property type="term" value="F:4 iron, 4 sulfur cluster binding"/>
    <property type="evidence" value="ECO:0007669"/>
    <property type="project" value="UniProtKB-UniRule"/>
</dbReference>
<dbReference type="GO" id="GO:0046872">
    <property type="term" value="F:metal ion binding"/>
    <property type="evidence" value="ECO:0007669"/>
    <property type="project" value="UniProtKB-KW"/>
</dbReference>
<dbReference type="GO" id="GO:0035597">
    <property type="term" value="F:N6-isopentenyladenosine methylthiotransferase activity"/>
    <property type="evidence" value="ECO:0007669"/>
    <property type="project" value="TreeGrafter"/>
</dbReference>
<dbReference type="CDD" id="cd01335">
    <property type="entry name" value="Radical_SAM"/>
    <property type="match status" value="1"/>
</dbReference>
<dbReference type="FunFam" id="3.40.50.12160:FF:000001">
    <property type="entry name" value="tRNA-2-methylthio-N(6)-dimethylallyladenosine synthase"/>
    <property type="match status" value="1"/>
</dbReference>
<dbReference type="FunFam" id="3.80.30.20:FF:000001">
    <property type="entry name" value="tRNA-2-methylthio-N(6)-dimethylallyladenosine synthase 2"/>
    <property type="match status" value="1"/>
</dbReference>
<dbReference type="Gene3D" id="3.40.50.12160">
    <property type="entry name" value="Methylthiotransferase, N-terminal domain"/>
    <property type="match status" value="1"/>
</dbReference>
<dbReference type="Gene3D" id="3.80.30.20">
    <property type="entry name" value="tm_1862 like domain"/>
    <property type="match status" value="1"/>
</dbReference>
<dbReference type="HAMAP" id="MF_01864">
    <property type="entry name" value="tRNA_metthiotr_MiaB"/>
    <property type="match status" value="1"/>
</dbReference>
<dbReference type="InterPro" id="IPR006638">
    <property type="entry name" value="Elp3/MiaA/NifB-like_rSAM"/>
</dbReference>
<dbReference type="InterPro" id="IPR005839">
    <property type="entry name" value="Methylthiotransferase"/>
</dbReference>
<dbReference type="InterPro" id="IPR020612">
    <property type="entry name" value="Methylthiotransferase_CS"/>
</dbReference>
<dbReference type="InterPro" id="IPR013848">
    <property type="entry name" value="Methylthiotransferase_N"/>
</dbReference>
<dbReference type="InterPro" id="IPR038135">
    <property type="entry name" value="Methylthiotransferase_N_sf"/>
</dbReference>
<dbReference type="InterPro" id="IPR006463">
    <property type="entry name" value="MiaB_methiolase"/>
</dbReference>
<dbReference type="InterPro" id="IPR007197">
    <property type="entry name" value="rSAM"/>
</dbReference>
<dbReference type="InterPro" id="IPR023404">
    <property type="entry name" value="rSAM_horseshoe"/>
</dbReference>
<dbReference type="InterPro" id="IPR002792">
    <property type="entry name" value="TRAM_dom"/>
</dbReference>
<dbReference type="NCBIfam" id="TIGR01574">
    <property type="entry name" value="miaB-methiolase"/>
    <property type="match status" value="1"/>
</dbReference>
<dbReference type="NCBIfam" id="TIGR00089">
    <property type="entry name" value="MiaB/RimO family radical SAM methylthiotransferase"/>
    <property type="match status" value="1"/>
</dbReference>
<dbReference type="PANTHER" id="PTHR43020">
    <property type="entry name" value="CDK5 REGULATORY SUBUNIT-ASSOCIATED PROTEIN 1"/>
    <property type="match status" value="1"/>
</dbReference>
<dbReference type="PANTHER" id="PTHR43020:SF2">
    <property type="entry name" value="MITOCHONDRIAL TRNA METHYLTHIOTRANSFERASE CDK5RAP1"/>
    <property type="match status" value="1"/>
</dbReference>
<dbReference type="Pfam" id="PF04055">
    <property type="entry name" value="Radical_SAM"/>
    <property type="match status" value="1"/>
</dbReference>
<dbReference type="Pfam" id="PF01938">
    <property type="entry name" value="TRAM"/>
    <property type="match status" value="1"/>
</dbReference>
<dbReference type="Pfam" id="PF00919">
    <property type="entry name" value="UPF0004"/>
    <property type="match status" value="1"/>
</dbReference>
<dbReference type="SFLD" id="SFLDF00273">
    <property type="entry name" value="(dimethylallyl)adenosine_tRNA"/>
    <property type="match status" value="1"/>
</dbReference>
<dbReference type="SFLD" id="SFLDG01082">
    <property type="entry name" value="B12-binding_domain_containing"/>
    <property type="match status" value="1"/>
</dbReference>
<dbReference type="SFLD" id="SFLDG01061">
    <property type="entry name" value="methylthiotransferase"/>
    <property type="match status" value="1"/>
</dbReference>
<dbReference type="SMART" id="SM00729">
    <property type="entry name" value="Elp3"/>
    <property type="match status" value="1"/>
</dbReference>
<dbReference type="SUPFAM" id="SSF102114">
    <property type="entry name" value="Radical SAM enzymes"/>
    <property type="match status" value="1"/>
</dbReference>
<dbReference type="PROSITE" id="PS51449">
    <property type="entry name" value="MTTASE_N"/>
    <property type="match status" value="1"/>
</dbReference>
<dbReference type="PROSITE" id="PS01278">
    <property type="entry name" value="MTTASE_RADICAL"/>
    <property type="match status" value="1"/>
</dbReference>
<dbReference type="PROSITE" id="PS51918">
    <property type="entry name" value="RADICAL_SAM"/>
    <property type="match status" value="1"/>
</dbReference>
<dbReference type="PROSITE" id="PS50926">
    <property type="entry name" value="TRAM"/>
    <property type="match status" value="1"/>
</dbReference>
<reference key="1">
    <citation type="journal article" date="2008" name="Environ. Microbiol.">
        <title>The genome of Erwinia tasmaniensis strain Et1/99, a non-pathogenic bacterium in the genus Erwinia.</title>
        <authorList>
            <person name="Kube M."/>
            <person name="Migdoll A.M."/>
            <person name="Mueller I."/>
            <person name="Kuhl H."/>
            <person name="Beck A."/>
            <person name="Reinhardt R."/>
            <person name="Geider K."/>
        </authorList>
    </citation>
    <scope>NUCLEOTIDE SEQUENCE [LARGE SCALE GENOMIC DNA]</scope>
    <source>
        <strain>DSM 17950 / CFBP 7177 / CIP 109463 / NCPPB 4357 / Et1/99</strain>
    </source>
</reference>
<proteinExistence type="inferred from homology"/>
<gene>
    <name evidence="1" type="primary">miaB</name>
    <name type="ordered locus">ETA_23370</name>
</gene>
<name>MIAB_ERWT9</name>
<keyword id="KW-0004">4Fe-4S</keyword>
<keyword id="KW-0963">Cytoplasm</keyword>
<keyword id="KW-0408">Iron</keyword>
<keyword id="KW-0411">Iron-sulfur</keyword>
<keyword id="KW-0479">Metal-binding</keyword>
<keyword id="KW-1185">Reference proteome</keyword>
<keyword id="KW-0949">S-adenosyl-L-methionine</keyword>
<keyword id="KW-0808">Transferase</keyword>
<keyword id="KW-0819">tRNA processing</keyword>
<organism>
    <name type="scientific">Erwinia tasmaniensis (strain DSM 17950 / CFBP 7177 / CIP 109463 / NCPPB 4357 / Et1/99)</name>
    <dbReference type="NCBI Taxonomy" id="465817"/>
    <lineage>
        <taxon>Bacteria</taxon>
        <taxon>Pseudomonadati</taxon>
        <taxon>Pseudomonadota</taxon>
        <taxon>Gammaproteobacteria</taxon>
        <taxon>Enterobacterales</taxon>
        <taxon>Erwiniaceae</taxon>
        <taxon>Erwinia</taxon>
    </lineage>
</organism>
<comment type="function">
    <text evidence="1">Catalyzes the methylthiolation of N6-(dimethylallyl)adenosine (i(6)A), leading to the formation of 2-methylthio-N6-(dimethylallyl)adenosine (ms(2)i(6)A) at position 37 in tRNAs that read codons beginning with uridine.</text>
</comment>
<comment type="catalytic activity">
    <reaction evidence="1">
        <text>N(6)-dimethylallyladenosine(37) in tRNA + (sulfur carrier)-SH + AH2 + 2 S-adenosyl-L-methionine = 2-methylsulfanyl-N(6)-dimethylallyladenosine(37) in tRNA + (sulfur carrier)-H + 5'-deoxyadenosine + L-methionine + A + S-adenosyl-L-homocysteine + 2 H(+)</text>
        <dbReference type="Rhea" id="RHEA:37067"/>
        <dbReference type="Rhea" id="RHEA-COMP:10375"/>
        <dbReference type="Rhea" id="RHEA-COMP:10376"/>
        <dbReference type="Rhea" id="RHEA-COMP:14737"/>
        <dbReference type="Rhea" id="RHEA-COMP:14739"/>
        <dbReference type="ChEBI" id="CHEBI:13193"/>
        <dbReference type="ChEBI" id="CHEBI:15378"/>
        <dbReference type="ChEBI" id="CHEBI:17319"/>
        <dbReference type="ChEBI" id="CHEBI:17499"/>
        <dbReference type="ChEBI" id="CHEBI:29917"/>
        <dbReference type="ChEBI" id="CHEBI:57844"/>
        <dbReference type="ChEBI" id="CHEBI:57856"/>
        <dbReference type="ChEBI" id="CHEBI:59789"/>
        <dbReference type="ChEBI" id="CHEBI:64428"/>
        <dbReference type="ChEBI" id="CHEBI:74415"/>
        <dbReference type="ChEBI" id="CHEBI:74417"/>
        <dbReference type="EC" id="2.8.4.3"/>
    </reaction>
</comment>
<comment type="cofactor">
    <cofactor evidence="1">
        <name>[4Fe-4S] cluster</name>
        <dbReference type="ChEBI" id="CHEBI:49883"/>
    </cofactor>
    <text evidence="1">Binds 2 [4Fe-4S] clusters. One cluster is coordinated with 3 cysteines and an exchangeable S-adenosyl-L-methionine.</text>
</comment>
<comment type="subunit">
    <text evidence="1">Monomer.</text>
</comment>
<comment type="subcellular location">
    <subcellularLocation>
        <location evidence="1">Cytoplasm</location>
    </subcellularLocation>
</comment>
<comment type="similarity">
    <text evidence="1">Belongs to the methylthiotransferase family. MiaB subfamily.</text>
</comment>
<comment type="sequence caution" evidence="3">
    <conflict type="erroneous initiation">
        <sequence resource="EMBL-CDS" id="CAO97383"/>
    </conflict>
</comment>
<protein>
    <recommendedName>
        <fullName evidence="1">tRNA-2-methylthio-N(6)-dimethylallyladenosine synthase</fullName>
        <ecNumber evidence="1">2.8.4.3</ecNumber>
    </recommendedName>
    <alternativeName>
        <fullName evidence="1">(Dimethylallyl)adenosine tRNA methylthiotransferase MiaB</fullName>
    </alternativeName>
    <alternativeName>
        <fullName evidence="1">tRNA-i(6)A37 methylthiotransferase</fullName>
    </alternativeName>
</protein>
<feature type="chain" id="PRO_0000374279" description="tRNA-2-methylthio-N(6)-dimethylallyladenosine synthase">
    <location>
        <begin position="1"/>
        <end position="474"/>
    </location>
</feature>
<feature type="domain" description="MTTase N-terminal" evidence="1">
    <location>
        <begin position="3"/>
        <end position="120"/>
    </location>
</feature>
<feature type="domain" description="Radical SAM core" evidence="2">
    <location>
        <begin position="143"/>
        <end position="375"/>
    </location>
</feature>
<feature type="domain" description="TRAM" evidence="1">
    <location>
        <begin position="378"/>
        <end position="441"/>
    </location>
</feature>
<feature type="binding site" evidence="1">
    <location>
        <position position="12"/>
    </location>
    <ligand>
        <name>[4Fe-4S] cluster</name>
        <dbReference type="ChEBI" id="CHEBI:49883"/>
        <label>1</label>
    </ligand>
</feature>
<feature type="binding site" evidence="1">
    <location>
        <position position="49"/>
    </location>
    <ligand>
        <name>[4Fe-4S] cluster</name>
        <dbReference type="ChEBI" id="CHEBI:49883"/>
        <label>1</label>
    </ligand>
</feature>
<feature type="binding site" evidence="1">
    <location>
        <position position="83"/>
    </location>
    <ligand>
        <name>[4Fe-4S] cluster</name>
        <dbReference type="ChEBI" id="CHEBI:49883"/>
        <label>1</label>
    </ligand>
</feature>
<feature type="binding site" evidence="1">
    <location>
        <position position="157"/>
    </location>
    <ligand>
        <name>[4Fe-4S] cluster</name>
        <dbReference type="ChEBI" id="CHEBI:49883"/>
        <label>2</label>
        <note>4Fe-4S-S-AdoMet</note>
    </ligand>
</feature>
<feature type="binding site" evidence="1">
    <location>
        <position position="161"/>
    </location>
    <ligand>
        <name>[4Fe-4S] cluster</name>
        <dbReference type="ChEBI" id="CHEBI:49883"/>
        <label>2</label>
        <note>4Fe-4S-S-AdoMet</note>
    </ligand>
</feature>
<feature type="binding site" evidence="1">
    <location>
        <position position="164"/>
    </location>
    <ligand>
        <name>[4Fe-4S] cluster</name>
        <dbReference type="ChEBI" id="CHEBI:49883"/>
        <label>2</label>
        <note>4Fe-4S-S-AdoMet</note>
    </ligand>
</feature>
<sequence>MTKKLHIKTWGCQMNEYDSSKMADLLNSTHGYTLTEQAEDADVLLLNTCSIREKAQEKVFALLGRWKKLKESNPDMIIGVGGCVASQEGAQIRQRASCVDIVFGPQTLHRLPEMINSVRGTRSPVVDVSFPEIEKFDRMPEPRADGPTAFVSIMEGCNKYCTFCVVPYTRGEEVSRPSDDILFEVAQLAAQGVREVNLLGQNVNAYRGETFDGGICSFAELLRLVAAIDGIDRIRFTTSHPIEFNDDIIDVYRDTPELVSFLHLPVQSGADRILTLMKRAHTALEYKAIIRKLLAARPNIQISSDFIIGFPGETQADFEQTMKLIGEINFDISYSFIYSARPGTPAADLPDDVSEDEKKQRLYILQDRINQQTTAWSRRKLGTVQRILVEGTSRKNVMELSGRTECNRVVNFEGSPEHIGKFVDVEITDVYANSLRGMLLRGEHQMALRTLETPASVIERTRKENELGVATWLP</sequence>